<accession>Q9RWP7</accession>
<dbReference type="EC" id="2.1.1.177" evidence="1"/>
<dbReference type="EMBL" id="AE000513">
    <property type="protein sequence ID" value="AAF10198.1"/>
    <property type="molecule type" value="Genomic_DNA"/>
</dbReference>
<dbReference type="PIR" id="H75495">
    <property type="entry name" value="H75495"/>
</dbReference>
<dbReference type="RefSeq" id="NP_294342.1">
    <property type="nucleotide sequence ID" value="NC_001263.1"/>
</dbReference>
<dbReference type="RefSeq" id="WP_010887264.1">
    <property type="nucleotide sequence ID" value="NC_001263.1"/>
</dbReference>
<dbReference type="SMR" id="Q9RWP7"/>
<dbReference type="FunCoup" id="Q9RWP7">
    <property type="interactions" value="164"/>
</dbReference>
<dbReference type="STRING" id="243230.DR_0619"/>
<dbReference type="PaxDb" id="243230-DR_0619"/>
<dbReference type="EnsemblBacteria" id="AAF10198">
    <property type="protein sequence ID" value="AAF10198"/>
    <property type="gene ID" value="DR_0619"/>
</dbReference>
<dbReference type="GeneID" id="69516864"/>
<dbReference type="KEGG" id="dra:DR_0619"/>
<dbReference type="PATRIC" id="fig|243230.17.peg.798"/>
<dbReference type="eggNOG" id="COG1576">
    <property type="taxonomic scope" value="Bacteria"/>
</dbReference>
<dbReference type="HOGENOM" id="CLU_100552_1_0_0"/>
<dbReference type="InParanoid" id="Q9RWP7"/>
<dbReference type="OrthoDB" id="9806643at2"/>
<dbReference type="Proteomes" id="UP000002524">
    <property type="component" value="Chromosome 1"/>
</dbReference>
<dbReference type="GO" id="GO:0005737">
    <property type="term" value="C:cytoplasm"/>
    <property type="evidence" value="ECO:0007669"/>
    <property type="project" value="UniProtKB-SubCell"/>
</dbReference>
<dbReference type="GO" id="GO:0070038">
    <property type="term" value="F:rRNA (pseudouridine-N3-)-methyltransferase activity"/>
    <property type="evidence" value="ECO:0007669"/>
    <property type="project" value="UniProtKB-UniRule"/>
</dbReference>
<dbReference type="CDD" id="cd18081">
    <property type="entry name" value="RlmH-like"/>
    <property type="match status" value="1"/>
</dbReference>
<dbReference type="Gene3D" id="3.40.1280.10">
    <property type="match status" value="1"/>
</dbReference>
<dbReference type="HAMAP" id="MF_00658">
    <property type="entry name" value="23SrRNA_methyltr_H"/>
    <property type="match status" value="1"/>
</dbReference>
<dbReference type="InterPro" id="IPR029028">
    <property type="entry name" value="Alpha/beta_knot_MTases"/>
</dbReference>
<dbReference type="InterPro" id="IPR003742">
    <property type="entry name" value="RlmH-like"/>
</dbReference>
<dbReference type="InterPro" id="IPR029026">
    <property type="entry name" value="tRNA_m1G_MTases_N"/>
</dbReference>
<dbReference type="PANTHER" id="PTHR33603">
    <property type="entry name" value="METHYLTRANSFERASE"/>
    <property type="match status" value="1"/>
</dbReference>
<dbReference type="PANTHER" id="PTHR33603:SF1">
    <property type="entry name" value="RIBOSOMAL RNA LARGE SUBUNIT METHYLTRANSFERASE H"/>
    <property type="match status" value="1"/>
</dbReference>
<dbReference type="Pfam" id="PF02590">
    <property type="entry name" value="SPOUT_MTase"/>
    <property type="match status" value="1"/>
</dbReference>
<dbReference type="PIRSF" id="PIRSF004505">
    <property type="entry name" value="MT_bac"/>
    <property type="match status" value="1"/>
</dbReference>
<dbReference type="SUPFAM" id="SSF75217">
    <property type="entry name" value="alpha/beta knot"/>
    <property type="match status" value="1"/>
</dbReference>
<feature type="chain" id="PRO_0000198111" description="Ribosomal RNA large subunit methyltransferase H">
    <location>
        <begin position="1"/>
        <end position="146"/>
    </location>
</feature>
<feature type="binding site" evidence="1">
    <location>
        <position position="62"/>
    </location>
    <ligand>
        <name>S-adenosyl-L-methionine</name>
        <dbReference type="ChEBI" id="CHEBI:59789"/>
    </ligand>
</feature>
<feature type="binding site" evidence="1">
    <location>
        <position position="94"/>
    </location>
    <ligand>
        <name>S-adenosyl-L-methionine</name>
        <dbReference type="ChEBI" id="CHEBI:59789"/>
    </ligand>
</feature>
<feature type="binding site" evidence="1">
    <location>
        <begin position="113"/>
        <end position="118"/>
    </location>
    <ligand>
        <name>S-adenosyl-L-methionine</name>
        <dbReference type="ChEBI" id="CHEBI:59789"/>
    </ligand>
</feature>
<gene>
    <name evidence="1" type="primary">rlmH</name>
    <name type="ordered locus">DR_0619</name>
</gene>
<evidence type="ECO:0000255" key="1">
    <source>
        <dbReference type="HAMAP-Rule" id="MF_00658"/>
    </source>
</evidence>
<reference key="1">
    <citation type="journal article" date="1999" name="Science">
        <title>Genome sequence of the radioresistant bacterium Deinococcus radiodurans R1.</title>
        <authorList>
            <person name="White O."/>
            <person name="Eisen J.A."/>
            <person name="Heidelberg J.F."/>
            <person name="Hickey E.K."/>
            <person name="Peterson J.D."/>
            <person name="Dodson R.J."/>
            <person name="Haft D.H."/>
            <person name="Gwinn M.L."/>
            <person name="Nelson W.C."/>
            <person name="Richardson D.L."/>
            <person name="Moffat K.S."/>
            <person name="Qin H."/>
            <person name="Jiang L."/>
            <person name="Pamphile W."/>
            <person name="Crosby M."/>
            <person name="Shen M."/>
            <person name="Vamathevan J.J."/>
            <person name="Lam P."/>
            <person name="McDonald L.A."/>
            <person name="Utterback T.R."/>
            <person name="Zalewski C."/>
            <person name="Makarova K.S."/>
            <person name="Aravind L."/>
            <person name="Daly M.J."/>
            <person name="Minton K.W."/>
            <person name="Fleischmann R.D."/>
            <person name="Ketchum K.A."/>
            <person name="Nelson K.E."/>
            <person name="Salzberg S.L."/>
            <person name="Smith H.O."/>
            <person name="Venter J.C."/>
            <person name="Fraser C.M."/>
        </authorList>
    </citation>
    <scope>NUCLEOTIDE SEQUENCE [LARGE SCALE GENOMIC DNA]</scope>
    <source>
        <strain>ATCC 13939 / DSM 20539 / JCM 16871 / CCUG 27074 / LMG 4051 / NBRC 15346 / NCIMB 9279 / VKM B-1422 / R1</strain>
    </source>
</reference>
<sequence length="146" mass="16018">MRLHLITVGEPKLAYARSGWDEYEKRLRRYHKVQVSRVSGKTQQAESEAILKAAGKSPLILLDPRGKQFSSEKLSEYLDAEALGGHGELAFAIGGPDGHTDALRGQAKLLWSLGELTLPHDLAMLVLVEALYRAATISAGEPYHRG</sequence>
<comment type="function">
    <text evidence="1">Specifically methylates the pseudouridine at position 1915 (m3Psi1915) in 23S rRNA.</text>
</comment>
<comment type="catalytic activity">
    <reaction evidence="1">
        <text>pseudouridine(1915) in 23S rRNA + S-adenosyl-L-methionine = N(3)-methylpseudouridine(1915) in 23S rRNA + S-adenosyl-L-homocysteine + H(+)</text>
        <dbReference type="Rhea" id="RHEA:42752"/>
        <dbReference type="Rhea" id="RHEA-COMP:10221"/>
        <dbReference type="Rhea" id="RHEA-COMP:10222"/>
        <dbReference type="ChEBI" id="CHEBI:15378"/>
        <dbReference type="ChEBI" id="CHEBI:57856"/>
        <dbReference type="ChEBI" id="CHEBI:59789"/>
        <dbReference type="ChEBI" id="CHEBI:65314"/>
        <dbReference type="ChEBI" id="CHEBI:74486"/>
        <dbReference type="EC" id="2.1.1.177"/>
    </reaction>
</comment>
<comment type="subunit">
    <text evidence="1">Homodimer.</text>
</comment>
<comment type="subcellular location">
    <subcellularLocation>
        <location evidence="1">Cytoplasm</location>
    </subcellularLocation>
</comment>
<comment type="similarity">
    <text evidence="1">Belongs to the RNA methyltransferase RlmH family.</text>
</comment>
<organism>
    <name type="scientific">Deinococcus radiodurans (strain ATCC 13939 / DSM 20539 / JCM 16871 / CCUG 27074 / LMG 4051 / NBRC 15346 / NCIMB 9279 / VKM B-1422 / R1)</name>
    <dbReference type="NCBI Taxonomy" id="243230"/>
    <lineage>
        <taxon>Bacteria</taxon>
        <taxon>Thermotogati</taxon>
        <taxon>Deinococcota</taxon>
        <taxon>Deinococci</taxon>
        <taxon>Deinococcales</taxon>
        <taxon>Deinococcaceae</taxon>
        <taxon>Deinococcus</taxon>
    </lineage>
</organism>
<name>RLMH_DEIRA</name>
<protein>
    <recommendedName>
        <fullName evidence="1">Ribosomal RNA large subunit methyltransferase H</fullName>
        <ecNumber evidence="1">2.1.1.177</ecNumber>
    </recommendedName>
    <alternativeName>
        <fullName evidence="1">23S rRNA (pseudouridine1915-N3)-methyltransferase</fullName>
    </alternativeName>
    <alternativeName>
        <fullName evidence="1">23S rRNA m3Psi1915 methyltransferase</fullName>
    </alternativeName>
    <alternativeName>
        <fullName evidence="1">rRNA (pseudouridine-N3-)-methyltransferase RlmH</fullName>
    </alternativeName>
</protein>
<proteinExistence type="inferred from homology"/>
<keyword id="KW-0963">Cytoplasm</keyword>
<keyword id="KW-0489">Methyltransferase</keyword>
<keyword id="KW-1185">Reference proteome</keyword>
<keyword id="KW-0698">rRNA processing</keyword>
<keyword id="KW-0949">S-adenosyl-L-methionine</keyword>
<keyword id="KW-0808">Transferase</keyword>